<keyword id="KW-0808">Transferase</keyword>
<keyword id="KW-0816">Tricarboxylic acid cycle</keyword>
<sequence length="320" mass="36285">TYIDGDKGILLYRGYPIEQLAEKGDFLESCYLLLYGELPTQQEKNDFDRRIMQHTMVHEQFSRFFQGFRRDSHPMAVMVACLGAMSAFYHDSIDITDPQQRMIASIRLISKVPTLAAMAYKYSIGQAFVYPHNSLSYAANFLRMCFAVPCEEYQVNPVLTRAMDRIFILHADHEQNASTSTVRLAGSSGANPFACIAAGVACLWGPAHGGANEACLKMLKEIGSVKKIPEFIARAKDKNDPFRLMGFGHRVYKNYDPRAKIMQKTCHEVLKELNRQDDPLLDIAIELEHIALNDEYFIEKKLYPNVDFYSGITLKALGFP</sequence>
<reference key="1">
    <citation type="journal article" date="1996" name="Int. J. Syst. Bacteriol.">
        <title>Comparison of partial citrate synthase gene (gltA) sequences for phylogenetic analysis of Bartonella species.</title>
        <authorList>
            <person name="Birtles R.J."/>
            <person name="Raoult D."/>
        </authorList>
    </citation>
    <scope>NUCLEOTIDE SEQUENCE [GENOMIC DNA]</scope>
    <source>
        <strain>ATCC 700133 / CCUG 50770 / CIP 107026 / NCTC 12862 / R18</strain>
    </source>
</reference>
<protein>
    <recommendedName>
        <fullName>Citrate synthase</fullName>
        <ecNumber>2.3.3.16</ecNumber>
    </recommendedName>
</protein>
<organism>
    <name type="scientific">Bartonella doshiae</name>
    <dbReference type="NCBI Taxonomy" id="33044"/>
    <lineage>
        <taxon>Bacteria</taxon>
        <taxon>Pseudomonadati</taxon>
        <taxon>Pseudomonadota</taxon>
        <taxon>Alphaproteobacteria</taxon>
        <taxon>Hyphomicrobiales</taxon>
        <taxon>Bartonellaceae</taxon>
        <taxon>Bartonella</taxon>
    </lineage>
</organism>
<proteinExistence type="inferred from homology"/>
<feature type="chain" id="PRO_0000169932" description="Citrate synthase">
    <location>
        <begin position="1" status="less than"/>
        <end position="320" status="greater than"/>
    </location>
</feature>
<feature type="active site" evidence="1">
    <location>
        <position position="249"/>
    </location>
</feature>
<feature type="active site" evidence="1">
    <location>
        <position position="307"/>
    </location>
</feature>
<feature type="non-terminal residue">
    <location>
        <position position="1"/>
    </location>
</feature>
<feature type="non-terminal residue">
    <location>
        <position position="320"/>
    </location>
</feature>
<accession>Q59198</accession>
<name>CISY_BARDO</name>
<gene>
    <name type="primary">gltA</name>
</gene>
<evidence type="ECO:0000255" key="1">
    <source>
        <dbReference type="PROSITE-ProRule" id="PRU10117"/>
    </source>
</evidence>
<evidence type="ECO:0000305" key="2"/>
<comment type="catalytic activity">
    <reaction evidence="1">
        <text>oxaloacetate + acetyl-CoA + H2O = citrate + CoA + H(+)</text>
        <dbReference type="Rhea" id="RHEA:16845"/>
        <dbReference type="ChEBI" id="CHEBI:15377"/>
        <dbReference type="ChEBI" id="CHEBI:15378"/>
        <dbReference type="ChEBI" id="CHEBI:16452"/>
        <dbReference type="ChEBI" id="CHEBI:16947"/>
        <dbReference type="ChEBI" id="CHEBI:57287"/>
        <dbReference type="ChEBI" id="CHEBI:57288"/>
        <dbReference type="EC" id="2.3.3.16"/>
    </reaction>
</comment>
<comment type="pathway">
    <text>Carbohydrate metabolism; tricarboxylic acid cycle; isocitrate from oxaloacetate: step 1/2.</text>
</comment>
<comment type="miscellaneous">
    <text>Citrate synthase is found in nearly all cells capable of oxidative metabolism.</text>
</comment>
<comment type="similarity">
    <text evidence="2">Belongs to the citrate synthase family.</text>
</comment>
<dbReference type="EC" id="2.3.3.16"/>
<dbReference type="EMBL" id="Z70017">
    <property type="protein sequence ID" value="CAA93839.1"/>
    <property type="molecule type" value="Genomic_DNA"/>
</dbReference>
<dbReference type="SMR" id="Q59198"/>
<dbReference type="STRING" id="33044.GCA_900005695_00247"/>
<dbReference type="UniPathway" id="UPA00223">
    <property type="reaction ID" value="UER00717"/>
</dbReference>
<dbReference type="GO" id="GO:0005737">
    <property type="term" value="C:cytoplasm"/>
    <property type="evidence" value="ECO:0007669"/>
    <property type="project" value="InterPro"/>
</dbReference>
<dbReference type="GO" id="GO:0004108">
    <property type="term" value="F:citrate (Si)-synthase activity"/>
    <property type="evidence" value="ECO:0007669"/>
    <property type="project" value="InterPro"/>
</dbReference>
<dbReference type="GO" id="GO:0006099">
    <property type="term" value="P:tricarboxylic acid cycle"/>
    <property type="evidence" value="ECO:0007669"/>
    <property type="project" value="UniProtKB-UniPathway"/>
</dbReference>
<dbReference type="FunFam" id="1.10.230.10:FF:000002">
    <property type="entry name" value="Citrate synthase"/>
    <property type="match status" value="1"/>
</dbReference>
<dbReference type="Gene3D" id="1.10.580.10">
    <property type="entry name" value="Citrate Synthase, domain 1"/>
    <property type="match status" value="1"/>
</dbReference>
<dbReference type="Gene3D" id="1.10.230.10">
    <property type="entry name" value="Cytochrome P450-Terp, domain 2"/>
    <property type="match status" value="1"/>
</dbReference>
<dbReference type="InterPro" id="IPR016142">
    <property type="entry name" value="Citrate_synth-like_lrg_a-sub"/>
</dbReference>
<dbReference type="InterPro" id="IPR016143">
    <property type="entry name" value="Citrate_synth-like_sm_a-sub"/>
</dbReference>
<dbReference type="InterPro" id="IPR002020">
    <property type="entry name" value="Citrate_synthase"/>
</dbReference>
<dbReference type="InterPro" id="IPR019810">
    <property type="entry name" value="Citrate_synthase_AS"/>
</dbReference>
<dbReference type="InterPro" id="IPR024176">
    <property type="entry name" value="Citrate_synthase_bac-typ"/>
</dbReference>
<dbReference type="InterPro" id="IPR036969">
    <property type="entry name" value="Citrate_synthase_sf"/>
</dbReference>
<dbReference type="InterPro" id="IPR010953">
    <property type="entry name" value="Citrate_synthase_typ-I"/>
</dbReference>
<dbReference type="NCBIfam" id="TIGR01798">
    <property type="entry name" value="cit_synth_I"/>
    <property type="match status" value="1"/>
</dbReference>
<dbReference type="NCBIfam" id="NF004126">
    <property type="entry name" value="PRK05614.1"/>
    <property type="match status" value="1"/>
</dbReference>
<dbReference type="PANTHER" id="PTHR42871">
    <property type="entry name" value="CITRATE SYNTHASE"/>
    <property type="match status" value="1"/>
</dbReference>
<dbReference type="PANTHER" id="PTHR42871:SF1">
    <property type="entry name" value="CITRATE SYNTHASE"/>
    <property type="match status" value="1"/>
</dbReference>
<dbReference type="Pfam" id="PF00285">
    <property type="entry name" value="Citrate_synt"/>
    <property type="match status" value="1"/>
</dbReference>
<dbReference type="PIRSF" id="PIRSF001369">
    <property type="entry name" value="Citrate_synth"/>
    <property type="match status" value="1"/>
</dbReference>
<dbReference type="PRINTS" id="PR00143">
    <property type="entry name" value="CITRTSNTHASE"/>
</dbReference>
<dbReference type="SUPFAM" id="SSF48256">
    <property type="entry name" value="Citrate synthase"/>
    <property type="match status" value="1"/>
</dbReference>
<dbReference type="PROSITE" id="PS00480">
    <property type="entry name" value="CITRATE_SYNTHASE"/>
    <property type="match status" value="1"/>
</dbReference>